<accession>Q5XC26</accession>
<dbReference type="EMBL" id="CP000003">
    <property type="protein sequence ID" value="AAT87037.1"/>
    <property type="status" value="ALT_INIT"/>
    <property type="molecule type" value="Genomic_DNA"/>
</dbReference>
<dbReference type="RefSeq" id="WP_027968836.1">
    <property type="nucleotide sequence ID" value="NC_006086.1"/>
</dbReference>
<dbReference type="SMR" id="Q5XC26"/>
<dbReference type="KEGG" id="spa:M6_Spy0902"/>
<dbReference type="HOGENOM" id="CLU_027562_9_6_9"/>
<dbReference type="Proteomes" id="UP000001167">
    <property type="component" value="Chromosome"/>
</dbReference>
<dbReference type="GO" id="GO:0005737">
    <property type="term" value="C:cytoplasm"/>
    <property type="evidence" value="ECO:0007669"/>
    <property type="project" value="UniProtKB-SubCell"/>
</dbReference>
<dbReference type="GO" id="GO:0003677">
    <property type="term" value="F:DNA binding"/>
    <property type="evidence" value="ECO:0007669"/>
    <property type="project" value="UniProtKB-KW"/>
</dbReference>
<dbReference type="GO" id="GO:0009037">
    <property type="term" value="F:tyrosine-based site-specific recombinase activity"/>
    <property type="evidence" value="ECO:0007669"/>
    <property type="project" value="UniProtKB-UniRule"/>
</dbReference>
<dbReference type="GO" id="GO:0051301">
    <property type="term" value="P:cell division"/>
    <property type="evidence" value="ECO:0007669"/>
    <property type="project" value="UniProtKB-KW"/>
</dbReference>
<dbReference type="GO" id="GO:0007059">
    <property type="term" value="P:chromosome segregation"/>
    <property type="evidence" value="ECO:0007669"/>
    <property type="project" value="UniProtKB-UniRule"/>
</dbReference>
<dbReference type="GO" id="GO:0006310">
    <property type="term" value="P:DNA recombination"/>
    <property type="evidence" value="ECO:0007669"/>
    <property type="project" value="UniProtKB-UniRule"/>
</dbReference>
<dbReference type="CDD" id="cd00397">
    <property type="entry name" value="DNA_BRE_C"/>
    <property type="match status" value="1"/>
</dbReference>
<dbReference type="Gene3D" id="1.10.150.130">
    <property type="match status" value="1"/>
</dbReference>
<dbReference type="Gene3D" id="1.10.443.10">
    <property type="entry name" value="Intergrase catalytic core"/>
    <property type="match status" value="1"/>
</dbReference>
<dbReference type="HAMAP" id="MF_01816">
    <property type="entry name" value="Recomb_XerS"/>
    <property type="match status" value="1"/>
</dbReference>
<dbReference type="InterPro" id="IPR044068">
    <property type="entry name" value="CB"/>
</dbReference>
<dbReference type="InterPro" id="IPR011010">
    <property type="entry name" value="DNA_brk_join_enz"/>
</dbReference>
<dbReference type="InterPro" id="IPR013762">
    <property type="entry name" value="Integrase-like_cat_sf"/>
</dbReference>
<dbReference type="InterPro" id="IPR002104">
    <property type="entry name" value="Integrase_catalytic"/>
</dbReference>
<dbReference type="InterPro" id="IPR010998">
    <property type="entry name" value="Integrase_recombinase_N"/>
</dbReference>
<dbReference type="InterPro" id="IPR004107">
    <property type="entry name" value="Integrase_SAM-like_N"/>
</dbReference>
<dbReference type="InterPro" id="IPR023670">
    <property type="entry name" value="Recomb_XerS"/>
</dbReference>
<dbReference type="InterPro" id="IPR050090">
    <property type="entry name" value="Tyrosine_recombinase_XerCD"/>
</dbReference>
<dbReference type="NCBIfam" id="NF003462">
    <property type="entry name" value="PRK05084.1"/>
    <property type="match status" value="1"/>
</dbReference>
<dbReference type="PANTHER" id="PTHR30349">
    <property type="entry name" value="PHAGE INTEGRASE-RELATED"/>
    <property type="match status" value="1"/>
</dbReference>
<dbReference type="PANTHER" id="PTHR30349:SF77">
    <property type="entry name" value="TYROSINE RECOMBINASE XERC"/>
    <property type="match status" value="1"/>
</dbReference>
<dbReference type="Pfam" id="PF02899">
    <property type="entry name" value="Phage_int_SAM_1"/>
    <property type="match status" value="1"/>
</dbReference>
<dbReference type="Pfam" id="PF00589">
    <property type="entry name" value="Phage_integrase"/>
    <property type="match status" value="1"/>
</dbReference>
<dbReference type="SUPFAM" id="SSF56349">
    <property type="entry name" value="DNA breaking-rejoining enzymes"/>
    <property type="match status" value="1"/>
</dbReference>
<dbReference type="PROSITE" id="PS51900">
    <property type="entry name" value="CB"/>
    <property type="match status" value="1"/>
</dbReference>
<dbReference type="PROSITE" id="PS51898">
    <property type="entry name" value="TYR_RECOMBINASE"/>
    <property type="match status" value="1"/>
</dbReference>
<organism>
    <name type="scientific">Streptococcus pyogenes serotype M6 (strain ATCC BAA-946 / MGAS10394)</name>
    <dbReference type="NCBI Taxonomy" id="286636"/>
    <lineage>
        <taxon>Bacteria</taxon>
        <taxon>Bacillati</taxon>
        <taxon>Bacillota</taxon>
        <taxon>Bacilli</taxon>
        <taxon>Lactobacillales</taxon>
        <taxon>Streptococcaceae</taxon>
        <taxon>Streptococcus</taxon>
    </lineage>
</organism>
<evidence type="ECO:0000255" key="1">
    <source>
        <dbReference type="HAMAP-Rule" id="MF_01816"/>
    </source>
</evidence>
<evidence type="ECO:0000255" key="2">
    <source>
        <dbReference type="PROSITE-ProRule" id="PRU01246"/>
    </source>
</evidence>
<evidence type="ECO:0000255" key="3">
    <source>
        <dbReference type="PROSITE-ProRule" id="PRU01248"/>
    </source>
</evidence>
<evidence type="ECO:0000305" key="4"/>
<feature type="chain" id="PRO_0000095367" description="Tyrosine recombinase XerS">
    <location>
        <begin position="1"/>
        <end position="356"/>
    </location>
</feature>
<feature type="domain" description="Core-binding (CB)" evidence="3">
    <location>
        <begin position="16"/>
        <end position="121"/>
    </location>
</feature>
<feature type="domain" description="Tyr recombinase" evidence="2">
    <location>
        <begin position="169"/>
        <end position="354"/>
    </location>
</feature>
<feature type="active site" evidence="1">
    <location>
        <position position="210"/>
    </location>
</feature>
<feature type="active site" evidence="1">
    <location>
        <position position="234"/>
    </location>
</feature>
<feature type="active site" evidence="1">
    <location>
        <position position="306"/>
    </location>
</feature>
<feature type="active site" evidence="1">
    <location>
        <position position="309"/>
    </location>
</feature>
<feature type="active site" evidence="1">
    <location>
        <position position="332"/>
    </location>
</feature>
<feature type="active site" description="O-(3'-phospho-DNA)-tyrosine intermediate" evidence="1">
    <location>
        <position position="341"/>
    </location>
</feature>
<name>XERS_STRP6</name>
<keyword id="KW-0131">Cell cycle</keyword>
<keyword id="KW-0132">Cell division</keyword>
<keyword id="KW-0159">Chromosome partition</keyword>
<keyword id="KW-0963">Cytoplasm</keyword>
<keyword id="KW-0229">DNA integration</keyword>
<keyword id="KW-0233">DNA recombination</keyword>
<keyword id="KW-0238">DNA-binding</keyword>
<comment type="function">
    <text evidence="1">Site-specific tyrosine recombinase, which acts by catalyzing the cutting and rejoining of the recombining DNA molecules. Essential to convert dimers of the bacterial chromosome into monomers to permit their segregation at cell division.</text>
</comment>
<comment type="activity regulation">
    <text evidence="1">FtsK is required for recombination.</text>
</comment>
<comment type="subcellular location">
    <subcellularLocation>
        <location evidence="1">Cytoplasm</location>
    </subcellularLocation>
</comment>
<comment type="similarity">
    <text evidence="1">Belongs to the 'phage' integrase family. XerS subfamily.</text>
</comment>
<comment type="sequence caution" evidence="4">
    <conflict type="erroneous initiation">
        <sequence resource="EMBL-CDS" id="AAT87037"/>
    </conflict>
</comment>
<gene>
    <name evidence="1" type="primary">xerS</name>
    <name type="ordered locus">M6_Spy0902</name>
</gene>
<proteinExistence type="inferred from homology"/>
<protein>
    <recommendedName>
        <fullName evidence="1">Tyrosine recombinase XerS</fullName>
    </recommendedName>
</protein>
<sequence>MRRELLLEKIETYKAIMPWYVLDYYQSKLAVPYSFTTLYEYLKEYKRFFDWLMDADLTQAPKIADIDLSTLEHLTKKDLEAFVLYLRERPSLNTYSTKEGLSQTTINRTLSALSSLYKYLTEEVENDQGEPYFYRNVMKKVSTKKKKETLASRAENIKQKLFLGDETLAFLDYVDKEYEQKLSNRAKSSFRKNKERDLAIISLLLASGVRLSEAVNLDLKDVNLNMMIIEVIRKGGKRDSVNVAGFAKGYLESYLAVRQRRYKAEKQDLAFFLTEYRGVPNRMDASSIEKMVGKYSEDFKIRVTPHKLRHTLATRLYDATKSQVLVSHQLGHSSTQVTDLYTHIVNDEQKNALDNL</sequence>
<reference key="1">
    <citation type="journal article" date="2004" name="J. Infect. Dis.">
        <title>Progress toward characterization of the group A Streptococcus metagenome: complete genome sequence of a macrolide-resistant serotype M6 strain.</title>
        <authorList>
            <person name="Banks D.J."/>
            <person name="Porcella S.F."/>
            <person name="Barbian K.D."/>
            <person name="Beres S.B."/>
            <person name="Philips L.E."/>
            <person name="Voyich J.M."/>
            <person name="DeLeo F.R."/>
            <person name="Martin J.M."/>
            <person name="Somerville G.A."/>
            <person name="Musser J.M."/>
        </authorList>
    </citation>
    <scope>NUCLEOTIDE SEQUENCE [LARGE SCALE GENOMIC DNA]</scope>
    <source>
        <strain>ATCC BAA-946 / MGAS10394</strain>
    </source>
</reference>